<comment type="function">
    <text evidence="2">Component of the ubiquinol-cytochrome c reductase complex (complex III or cytochrome b-c1 complex) that is part of the mitochondrial respiratory chain. The b-c1 complex mediates electron transfer from ubiquinol to cytochrome c. Contributes to the generation of a proton gradient across the mitochondrial membrane that is then used for ATP synthesis.</text>
</comment>
<comment type="cofactor">
    <cofactor evidence="2">
        <name>heme b</name>
        <dbReference type="ChEBI" id="CHEBI:60344"/>
    </cofactor>
    <text evidence="2">Binds 2 heme b groups non-covalently.</text>
</comment>
<comment type="subunit">
    <text evidence="2">The cytochrome bc1 complex contains 11 subunits: 3 respiratory subunits (MT-CYB, CYC1 and UQCRFS1), 2 core proteins (UQCRC1 and UQCRC2) and 6 low-molecular weight proteins (UQCRH/QCR6, UQCRB/QCR7, UQCRQ/QCR8, UQCR10/QCR9, UQCR11/QCR10 and a cleavage product of UQCRFS1). This cytochrome bc1 complex then forms a dimer.</text>
</comment>
<comment type="subcellular location">
    <subcellularLocation>
        <location evidence="2">Mitochondrion inner membrane</location>
        <topology evidence="2">Multi-pass membrane protein</topology>
    </subcellularLocation>
</comment>
<comment type="miscellaneous">
    <text evidence="1">Heme 1 (or BL or b562) is low-potential and absorbs at about 562 nm, and heme 2 (or BH or b566) is high-potential and absorbs at about 566 nm.</text>
</comment>
<comment type="similarity">
    <text evidence="3 4">Belongs to the cytochrome b family.</text>
</comment>
<comment type="caution">
    <text evidence="2">The full-length protein contains only eight transmembrane helices, not nine as predicted by bioinformatics tools.</text>
</comment>
<evidence type="ECO:0000250" key="1"/>
<evidence type="ECO:0000250" key="2">
    <source>
        <dbReference type="UniProtKB" id="P00157"/>
    </source>
</evidence>
<evidence type="ECO:0000255" key="3">
    <source>
        <dbReference type="PROSITE-ProRule" id="PRU00967"/>
    </source>
</evidence>
<evidence type="ECO:0000255" key="4">
    <source>
        <dbReference type="PROSITE-ProRule" id="PRU00968"/>
    </source>
</evidence>
<reference key="1">
    <citation type="journal article" date="2003" name="J. Mammal.">
        <title>Phylogenetic diversification within shrews of the Sorex cinereus group (Soricidae).</title>
        <authorList>
            <person name="Demboski J.R."/>
            <person name="Cook J.A."/>
        </authorList>
    </citation>
    <scope>NUCLEOTIDE SEQUENCE [GENOMIC DNA]</scope>
</reference>
<accession>Q8SE77</accession>
<sequence length="379" mass="42625">MTNLRKTHPLMKIINSSFIDLPAPSNISSWWNFGSLLGICLIVQILTGLFLAMHYTSDTMTAFSSVTHICRDVNYGWLIRYLHANGASMFFICLFLHVGRGLYYGSYMFLETWNIGVLLLFAVMATAFMGYVLPWGQMSFWGATVITNLLSAIPYIGSDLVEWIWGGFSVDKATLTRFFAFHFILPFIIAALAGVHLLFLHETGSNNPSGLCSDADKIPFHPYYTIKDILGVLLLILVLTSLVLFSPDLLGDPDNYTPANPLNTPPHIKPEWYFLFAYAILRSIPNKLGGVLALVLSILVLAVVPFLHTSKQRSMMFRPFSQCLFWILVADLLTLTWIGGQPVEHPFIIIGQLASILYFLLILVLMPITSLFENNLLKW</sequence>
<organism>
    <name type="scientific">Sorex camtschatica</name>
    <name type="common">Kamchatka shrew</name>
    <name type="synonym">Sorex cinereus camtschatica</name>
    <dbReference type="NCBI Taxonomy" id="144772"/>
    <lineage>
        <taxon>Eukaryota</taxon>
        <taxon>Metazoa</taxon>
        <taxon>Chordata</taxon>
        <taxon>Craniata</taxon>
        <taxon>Vertebrata</taxon>
        <taxon>Euteleostomi</taxon>
        <taxon>Mammalia</taxon>
        <taxon>Eutheria</taxon>
        <taxon>Laurasiatheria</taxon>
        <taxon>Eulipotyphla</taxon>
        <taxon>Soricidae</taxon>
        <taxon>Soricinae</taxon>
        <taxon>Sorex</taxon>
    </lineage>
</organism>
<protein>
    <recommendedName>
        <fullName>Cytochrome b</fullName>
    </recommendedName>
    <alternativeName>
        <fullName>Complex III subunit 3</fullName>
    </alternativeName>
    <alternativeName>
        <fullName>Complex III subunit III</fullName>
    </alternativeName>
    <alternativeName>
        <fullName>Cytochrome b-c1 complex subunit 3</fullName>
    </alternativeName>
    <alternativeName>
        <fullName>Ubiquinol-cytochrome-c reductase complex cytochrome b subunit</fullName>
    </alternativeName>
</protein>
<name>CYB_SORCM</name>
<feature type="chain" id="PRO_0000061554" description="Cytochrome b">
    <location>
        <begin position="1"/>
        <end position="379"/>
    </location>
</feature>
<feature type="transmembrane region" description="Helical" evidence="2">
    <location>
        <begin position="33"/>
        <end position="53"/>
    </location>
</feature>
<feature type="transmembrane region" description="Helical" evidence="2">
    <location>
        <begin position="77"/>
        <end position="98"/>
    </location>
</feature>
<feature type="transmembrane region" description="Helical" evidence="2">
    <location>
        <begin position="113"/>
        <end position="133"/>
    </location>
</feature>
<feature type="transmembrane region" description="Helical" evidence="2">
    <location>
        <begin position="178"/>
        <end position="198"/>
    </location>
</feature>
<feature type="transmembrane region" description="Helical" evidence="2">
    <location>
        <begin position="226"/>
        <end position="246"/>
    </location>
</feature>
<feature type="transmembrane region" description="Helical" evidence="2">
    <location>
        <begin position="288"/>
        <end position="308"/>
    </location>
</feature>
<feature type="transmembrane region" description="Helical" evidence="2">
    <location>
        <begin position="320"/>
        <end position="340"/>
    </location>
</feature>
<feature type="transmembrane region" description="Helical" evidence="2">
    <location>
        <begin position="347"/>
        <end position="367"/>
    </location>
</feature>
<feature type="binding site" description="axial binding residue" evidence="2">
    <location>
        <position position="83"/>
    </location>
    <ligand>
        <name>heme b</name>
        <dbReference type="ChEBI" id="CHEBI:60344"/>
        <label>b562</label>
    </ligand>
    <ligandPart>
        <name>Fe</name>
        <dbReference type="ChEBI" id="CHEBI:18248"/>
    </ligandPart>
</feature>
<feature type="binding site" description="axial binding residue" evidence="2">
    <location>
        <position position="97"/>
    </location>
    <ligand>
        <name>heme b</name>
        <dbReference type="ChEBI" id="CHEBI:60344"/>
        <label>b566</label>
    </ligand>
    <ligandPart>
        <name>Fe</name>
        <dbReference type="ChEBI" id="CHEBI:18248"/>
    </ligandPart>
</feature>
<feature type="binding site" description="axial binding residue" evidence="2">
    <location>
        <position position="182"/>
    </location>
    <ligand>
        <name>heme b</name>
        <dbReference type="ChEBI" id="CHEBI:60344"/>
        <label>b562</label>
    </ligand>
    <ligandPart>
        <name>Fe</name>
        <dbReference type="ChEBI" id="CHEBI:18248"/>
    </ligandPart>
</feature>
<feature type="binding site" description="axial binding residue" evidence="2">
    <location>
        <position position="196"/>
    </location>
    <ligand>
        <name>heme b</name>
        <dbReference type="ChEBI" id="CHEBI:60344"/>
        <label>b566</label>
    </ligand>
    <ligandPart>
        <name>Fe</name>
        <dbReference type="ChEBI" id="CHEBI:18248"/>
    </ligandPart>
</feature>
<feature type="binding site" evidence="2">
    <location>
        <position position="201"/>
    </location>
    <ligand>
        <name>a ubiquinone</name>
        <dbReference type="ChEBI" id="CHEBI:16389"/>
    </ligand>
</feature>
<geneLocation type="mitochondrion"/>
<gene>
    <name type="primary">MT-CYB</name>
    <name type="synonym">COB</name>
    <name type="synonym">CYTB</name>
    <name type="synonym">MTCYB</name>
</gene>
<keyword id="KW-0249">Electron transport</keyword>
<keyword id="KW-0349">Heme</keyword>
<keyword id="KW-0408">Iron</keyword>
<keyword id="KW-0472">Membrane</keyword>
<keyword id="KW-0479">Metal-binding</keyword>
<keyword id="KW-0496">Mitochondrion</keyword>
<keyword id="KW-0999">Mitochondrion inner membrane</keyword>
<keyword id="KW-0679">Respiratory chain</keyword>
<keyword id="KW-0812">Transmembrane</keyword>
<keyword id="KW-1133">Transmembrane helix</keyword>
<keyword id="KW-0813">Transport</keyword>
<keyword id="KW-0830">Ubiquinone</keyword>
<proteinExistence type="inferred from homology"/>
<dbReference type="EMBL" id="AY014916">
    <property type="protein sequence ID" value="AAG40475.1"/>
    <property type="molecule type" value="Genomic_DNA"/>
</dbReference>
<dbReference type="EMBL" id="AY014917">
    <property type="protein sequence ID" value="AAG40476.1"/>
    <property type="molecule type" value="Genomic_DNA"/>
</dbReference>
<dbReference type="EMBL" id="AY014918">
    <property type="protein sequence ID" value="AAG40477.1"/>
    <property type="molecule type" value="Genomic_DNA"/>
</dbReference>
<dbReference type="EMBL" id="AY014919">
    <property type="protein sequence ID" value="AAG40478.1"/>
    <property type="molecule type" value="Genomic_DNA"/>
</dbReference>
<dbReference type="EMBL" id="AY014920">
    <property type="protein sequence ID" value="AAG40479.1"/>
    <property type="molecule type" value="Genomic_DNA"/>
</dbReference>
<dbReference type="SMR" id="Q8SE77"/>
<dbReference type="GO" id="GO:0005743">
    <property type="term" value="C:mitochondrial inner membrane"/>
    <property type="evidence" value="ECO:0007669"/>
    <property type="project" value="UniProtKB-SubCell"/>
</dbReference>
<dbReference type="GO" id="GO:0045275">
    <property type="term" value="C:respiratory chain complex III"/>
    <property type="evidence" value="ECO:0007669"/>
    <property type="project" value="InterPro"/>
</dbReference>
<dbReference type="GO" id="GO:0046872">
    <property type="term" value="F:metal ion binding"/>
    <property type="evidence" value="ECO:0007669"/>
    <property type="project" value="UniProtKB-KW"/>
</dbReference>
<dbReference type="GO" id="GO:0008121">
    <property type="term" value="F:ubiquinol-cytochrome-c reductase activity"/>
    <property type="evidence" value="ECO:0007669"/>
    <property type="project" value="InterPro"/>
</dbReference>
<dbReference type="GO" id="GO:0006122">
    <property type="term" value="P:mitochondrial electron transport, ubiquinol to cytochrome c"/>
    <property type="evidence" value="ECO:0007669"/>
    <property type="project" value="TreeGrafter"/>
</dbReference>
<dbReference type="CDD" id="cd00290">
    <property type="entry name" value="cytochrome_b_C"/>
    <property type="match status" value="1"/>
</dbReference>
<dbReference type="CDD" id="cd00284">
    <property type="entry name" value="Cytochrome_b_N"/>
    <property type="match status" value="1"/>
</dbReference>
<dbReference type="FunFam" id="1.20.810.10:FF:000002">
    <property type="entry name" value="Cytochrome b"/>
    <property type="match status" value="1"/>
</dbReference>
<dbReference type="Gene3D" id="1.20.810.10">
    <property type="entry name" value="Cytochrome Bc1 Complex, Chain C"/>
    <property type="match status" value="1"/>
</dbReference>
<dbReference type="InterPro" id="IPR005798">
    <property type="entry name" value="Cyt_b/b6_C"/>
</dbReference>
<dbReference type="InterPro" id="IPR036150">
    <property type="entry name" value="Cyt_b/b6_C_sf"/>
</dbReference>
<dbReference type="InterPro" id="IPR005797">
    <property type="entry name" value="Cyt_b/b6_N"/>
</dbReference>
<dbReference type="InterPro" id="IPR027387">
    <property type="entry name" value="Cytb/b6-like_sf"/>
</dbReference>
<dbReference type="InterPro" id="IPR030689">
    <property type="entry name" value="Cytochrome_b"/>
</dbReference>
<dbReference type="InterPro" id="IPR048260">
    <property type="entry name" value="Cytochrome_b_C_euk/bac"/>
</dbReference>
<dbReference type="InterPro" id="IPR048259">
    <property type="entry name" value="Cytochrome_b_N_euk/bac"/>
</dbReference>
<dbReference type="InterPro" id="IPR016174">
    <property type="entry name" value="Di-haem_cyt_TM"/>
</dbReference>
<dbReference type="PANTHER" id="PTHR19271">
    <property type="entry name" value="CYTOCHROME B"/>
    <property type="match status" value="1"/>
</dbReference>
<dbReference type="PANTHER" id="PTHR19271:SF16">
    <property type="entry name" value="CYTOCHROME B"/>
    <property type="match status" value="1"/>
</dbReference>
<dbReference type="Pfam" id="PF00032">
    <property type="entry name" value="Cytochrom_B_C"/>
    <property type="match status" value="1"/>
</dbReference>
<dbReference type="Pfam" id="PF00033">
    <property type="entry name" value="Cytochrome_B"/>
    <property type="match status" value="1"/>
</dbReference>
<dbReference type="PIRSF" id="PIRSF038885">
    <property type="entry name" value="COB"/>
    <property type="match status" value="1"/>
</dbReference>
<dbReference type="SUPFAM" id="SSF81648">
    <property type="entry name" value="a domain/subunit of cytochrome bc1 complex (Ubiquinol-cytochrome c reductase)"/>
    <property type="match status" value="1"/>
</dbReference>
<dbReference type="SUPFAM" id="SSF81342">
    <property type="entry name" value="Transmembrane di-heme cytochromes"/>
    <property type="match status" value="1"/>
</dbReference>
<dbReference type="PROSITE" id="PS51003">
    <property type="entry name" value="CYTB_CTER"/>
    <property type="match status" value="1"/>
</dbReference>
<dbReference type="PROSITE" id="PS51002">
    <property type="entry name" value="CYTB_NTER"/>
    <property type="match status" value="1"/>
</dbReference>